<gene>
    <name type="primary">glxK</name>
    <name type="ordered locus">BCE_0153</name>
</gene>
<name>GLXK_BACC1</name>
<accession>Q9XBL1</accession>
<feature type="chain" id="PRO_0000071535" description="Glycerate kinase">
    <location>
        <begin position="1"/>
        <end position="381"/>
    </location>
</feature>
<evidence type="ECO:0000305" key="1"/>
<sequence>MKVVIASDSYKESLKAIEVCEAIERGFGAIFPKAEYVKIPIGDGGEGTVDSLVDATSGRIISFHVTGPLRESVQAFYGMSKDKKTAFIEMAAASGLQHVPAKKRNPLITTTKGTGELILHALDEGAEHIILGLGGSATNDGGAGMLSALGVRFINGKGEVIEPSGGTLHSIVSIDFSQMDSRLKHIKIEAACDVDNPLVGIRGASFVFGRQKGADEEMMKELDENLKHYAHILKQYLFCDVSKIPGAGAAGGMGAAVIAVLKGSLRRGIEIVLDYTNFDKHIEGADLIITGEGRIDEQTAYGKAPVGVAERAKLFHIPVIAIGGSVSPNYSAVHEKGIDAVFSITTSPTTLEEAYKVAEENIEMTAKNIAAVWKIASEKHF</sequence>
<organism>
    <name type="scientific">Bacillus cereus (strain ATCC 10987 / NRS 248)</name>
    <dbReference type="NCBI Taxonomy" id="222523"/>
    <lineage>
        <taxon>Bacteria</taxon>
        <taxon>Bacillati</taxon>
        <taxon>Bacillota</taxon>
        <taxon>Bacilli</taxon>
        <taxon>Bacillales</taxon>
        <taxon>Bacillaceae</taxon>
        <taxon>Bacillus</taxon>
        <taxon>Bacillus cereus group</taxon>
    </lineage>
</organism>
<protein>
    <recommendedName>
        <fullName>Glycerate kinase</fullName>
        <ecNumber>2.7.1.31</ecNumber>
    </recommendedName>
</protein>
<comment type="catalytic activity">
    <reaction>
        <text>(R)-glycerate + ATP = (2R)-3-phosphoglycerate + ADP + H(+)</text>
        <dbReference type="Rhea" id="RHEA:23516"/>
        <dbReference type="ChEBI" id="CHEBI:15378"/>
        <dbReference type="ChEBI" id="CHEBI:16659"/>
        <dbReference type="ChEBI" id="CHEBI:30616"/>
        <dbReference type="ChEBI" id="CHEBI:58272"/>
        <dbReference type="ChEBI" id="CHEBI:456216"/>
        <dbReference type="EC" id="2.7.1.31"/>
    </reaction>
</comment>
<comment type="similarity">
    <text evidence="1">Belongs to the glycerate kinase type-1 family.</text>
</comment>
<reference key="1">
    <citation type="journal article" date="2004" name="Nucleic Acids Res.">
        <title>The genome sequence of Bacillus cereus ATCC 10987 reveals metabolic adaptations and a large plasmid related to Bacillus anthracis pXO1.</title>
        <authorList>
            <person name="Rasko D.A."/>
            <person name="Ravel J."/>
            <person name="Oekstad O.A."/>
            <person name="Helgason E."/>
            <person name="Cer R.Z."/>
            <person name="Jiang L."/>
            <person name="Shores K.A."/>
            <person name="Fouts D.E."/>
            <person name="Tourasse N.J."/>
            <person name="Angiuoli S.V."/>
            <person name="Kolonay J.F."/>
            <person name="Nelson W.C."/>
            <person name="Kolstoe A.-B."/>
            <person name="Fraser C.M."/>
            <person name="Read T.D."/>
        </authorList>
    </citation>
    <scope>NUCLEOTIDE SEQUENCE [LARGE SCALE GENOMIC DNA]</scope>
    <source>
        <strain>ATCC 10987 / NRS 248</strain>
    </source>
</reference>
<reference key="2">
    <citation type="journal article" date="1999" name="Microbiology">
        <title>Genome organization is not conserved between Bacillus cereus and Bacillus subtilis.</title>
        <authorList>
            <person name="Oekstad O.A."/>
            <person name="Hegna I.K."/>
            <person name="Lindbaeck T."/>
            <person name="Rishovd A.-L."/>
            <person name="Kolstoe A.-B."/>
        </authorList>
    </citation>
    <scope>NUCLEOTIDE SEQUENCE [GENOMIC DNA] OF 313-381</scope>
    <source>
        <strain>ATCC 10987 / NRS 248</strain>
    </source>
</reference>
<keyword id="KW-0067">ATP-binding</keyword>
<keyword id="KW-0418">Kinase</keyword>
<keyword id="KW-0547">Nucleotide-binding</keyword>
<keyword id="KW-0808">Transferase</keyword>
<dbReference type="EC" id="2.7.1.31"/>
<dbReference type="EMBL" id="AE017194">
    <property type="protein sequence ID" value="AAS39089.1"/>
    <property type="molecule type" value="Genomic_DNA"/>
</dbReference>
<dbReference type="EMBL" id="AJ010129">
    <property type="protein sequence ID" value="CAB40583.1"/>
    <property type="molecule type" value="Genomic_DNA"/>
</dbReference>
<dbReference type="SMR" id="Q9XBL1"/>
<dbReference type="KEGG" id="bca:BCE_0153"/>
<dbReference type="HOGENOM" id="CLU_028255_0_0_9"/>
<dbReference type="Proteomes" id="UP000002527">
    <property type="component" value="Chromosome"/>
</dbReference>
<dbReference type="GO" id="GO:0005524">
    <property type="term" value="F:ATP binding"/>
    <property type="evidence" value="ECO:0007669"/>
    <property type="project" value="UniProtKB-KW"/>
</dbReference>
<dbReference type="GO" id="GO:0008887">
    <property type="term" value="F:glycerate kinase activity"/>
    <property type="evidence" value="ECO:0007669"/>
    <property type="project" value="UniProtKB-EC"/>
</dbReference>
<dbReference type="GO" id="GO:0031388">
    <property type="term" value="P:organic acid phosphorylation"/>
    <property type="evidence" value="ECO:0007669"/>
    <property type="project" value="InterPro"/>
</dbReference>
<dbReference type="Gene3D" id="3.40.50.10350">
    <property type="entry name" value="Glycerate kinase, domain 1"/>
    <property type="match status" value="1"/>
</dbReference>
<dbReference type="Gene3D" id="3.90.1510.10">
    <property type="entry name" value="Glycerate kinase, domain 2"/>
    <property type="match status" value="1"/>
</dbReference>
<dbReference type="InterPro" id="IPR018193">
    <property type="entry name" value="Glyc_kinase_flavodox-like_fold"/>
</dbReference>
<dbReference type="InterPro" id="IPR004381">
    <property type="entry name" value="Glycerate_kinase"/>
</dbReference>
<dbReference type="InterPro" id="IPR018197">
    <property type="entry name" value="Glycerate_kinase_RE-like"/>
</dbReference>
<dbReference type="InterPro" id="IPR036129">
    <property type="entry name" value="Glycerate_kinase_sf"/>
</dbReference>
<dbReference type="NCBIfam" id="TIGR00045">
    <property type="entry name" value="glycerate kinase"/>
    <property type="match status" value="1"/>
</dbReference>
<dbReference type="PANTHER" id="PTHR21599">
    <property type="entry name" value="GLYCERATE KINASE"/>
    <property type="match status" value="1"/>
</dbReference>
<dbReference type="PANTHER" id="PTHR21599:SF0">
    <property type="entry name" value="GLYCERATE KINASE"/>
    <property type="match status" value="1"/>
</dbReference>
<dbReference type="Pfam" id="PF02595">
    <property type="entry name" value="Gly_kinase"/>
    <property type="match status" value="1"/>
</dbReference>
<dbReference type="PIRSF" id="PIRSF006078">
    <property type="entry name" value="GlxK"/>
    <property type="match status" value="1"/>
</dbReference>
<dbReference type="SUPFAM" id="SSF110738">
    <property type="entry name" value="Glycerate kinase I"/>
    <property type="match status" value="1"/>
</dbReference>
<proteinExistence type="inferred from homology"/>